<protein>
    <recommendedName>
        <fullName evidence="4">Fe(2+) transporter FeoB</fullName>
    </recommendedName>
    <alternativeName>
        <fullName>Ferrous iron transport protein B</fullName>
    </alternativeName>
</protein>
<feature type="chain" id="PRO_0000210846" description="Fe(2+) transporter FeoB">
    <location>
        <begin position="1"/>
        <end position="664"/>
    </location>
</feature>
<feature type="transmembrane region" description="Helical" evidence="2">
    <location>
        <begin position="281"/>
        <end position="301"/>
    </location>
</feature>
<feature type="transmembrane region" description="Helical" evidence="2">
    <location>
        <begin position="342"/>
        <end position="362"/>
    </location>
</feature>
<feature type="transmembrane region" description="Helical" evidence="2">
    <location>
        <begin position="382"/>
        <end position="402"/>
    </location>
</feature>
<feature type="transmembrane region" description="Helical" evidence="2">
    <location>
        <begin position="425"/>
        <end position="445"/>
    </location>
</feature>
<feature type="transmembrane region" description="Helical" evidence="2">
    <location>
        <begin position="452"/>
        <end position="472"/>
    </location>
</feature>
<feature type="transmembrane region" description="Helical" evidence="2">
    <location>
        <begin position="516"/>
        <end position="536"/>
    </location>
</feature>
<feature type="transmembrane region" description="Helical" evidence="2">
    <location>
        <begin position="544"/>
        <end position="564"/>
    </location>
</feature>
<feature type="transmembrane region" description="Helical" evidence="2">
    <location>
        <begin position="567"/>
        <end position="587"/>
    </location>
</feature>
<feature type="transmembrane region" description="Helical" evidence="2">
    <location>
        <begin position="608"/>
        <end position="628"/>
    </location>
</feature>
<feature type="transmembrane region" description="Helical" evidence="2">
    <location>
        <begin position="637"/>
        <end position="657"/>
    </location>
</feature>
<feature type="domain" description="FeoB-type G" evidence="3">
    <location>
        <begin position="1"/>
        <end position="161"/>
    </location>
</feature>
<feature type="binding site" evidence="3">
    <location>
        <begin position="8"/>
        <end position="15"/>
    </location>
    <ligand>
        <name>GTP</name>
        <dbReference type="ChEBI" id="CHEBI:37565"/>
        <label>1</label>
    </ligand>
</feature>
<feature type="binding site" evidence="3">
    <location>
        <begin position="33"/>
        <end position="37"/>
    </location>
    <ligand>
        <name>GTP</name>
        <dbReference type="ChEBI" id="CHEBI:37565"/>
        <label>2</label>
    </ligand>
</feature>
<feature type="binding site" evidence="3">
    <location>
        <begin position="52"/>
        <end position="55"/>
    </location>
    <ligand>
        <name>GTP</name>
        <dbReference type="ChEBI" id="CHEBI:37565"/>
        <label>3</label>
    </ligand>
</feature>
<feature type="binding site" evidence="3">
    <location>
        <begin position="112"/>
        <end position="115"/>
    </location>
    <ligand>
        <name>GTP</name>
        <dbReference type="ChEBI" id="CHEBI:37565"/>
    </ligand>
</feature>
<feature type="binding site" evidence="3">
    <location>
        <begin position="141"/>
        <end position="143"/>
    </location>
    <ligand>
        <name>GTP</name>
        <dbReference type="ChEBI" id="CHEBI:37565"/>
    </ligand>
</feature>
<accession>Q8NUR5</accession>
<organism>
    <name type="scientific">Staphylococcus aureus (strain MW2)</name>
    <dbReference type="NCBI Taxonomy" id="196620"/>
    <lineage>
        <taxon>Bacteria</taxon>
        <taxon>Bacillati</taxon>
        <taxon>Bacillota</taxon>
        <taxon>Bacilli</taxon>
        <taxon>Bacillales</taxon>
        <taxon>Staphylococcaceae</taxon>
        <taxon>Staphylococcus</taxon>
    </lineage>
</organism>
<dbReference type="EMBL" id="BA000033">
    <property type="protein sequence ID" value="BAB96336.1"/>
    <property type="molecule type" value="Genomic_DNA"/>
</dbReference>
<dbReference type="RefSeq" id="WP_000432897.1">
    <property type="nucleotide sequence ID" value="NC_003923.1"/>
</dbReference>
<dbReference type="SMR" id="Q8NUR5"/>
<dbReference type="KEGG" id="sam:MW2471"/>
<dbReference type="HOGENOM" id="CLU_013350_3_0_9"/>
<dbReference type="GO" id="GO:0005886">
    <property type="term" value="C:plasma membrane"/>
    <property type="evidence" value="ECO:0007669"/>
    <property type="project" value="UniProtKB-SubCell"/>
</dbReference>
<dbReference type="GO" id="GO:0015093">
    <property type="term" value="F:ferrous iron transmembrane transporter activity"/>
    <property type="evidence" value="ECO:0007669"/>
    <property type="project" value="InterPro"/>
</dbReference>
<dbReference type="GO" id="GO:0005525">
    <property type="term" value="F:GTP binding"/>
    <property type="evidence" value="ECO:0007669"/>
    <property type="project" value="UniProtKB-KW"/>
</dbReference>
<dbReference type="CDD" id="cd01879">
    <property type="entry name" value="FeoB"/>
    <property type="match status" value="1"/>
</dbReference>
<dbReference type="FunFam" id="3.40.50.300:FF:001475">
    <property type="entry name" value="Ferrous iron transport protein B"/>
    <property type="match status" value="1"/>
</dbReference>
<dbReference type="Gene3D" id="1.10.287.1770">
    <property type="match status" value="1"/>
</dbReference>
<dbReference type="Gene3D" id="3.40.50.300">
    <property type="entry name" value="P-loop containing nucleotide triphosphate hydrolases"/>
    <property type="match status" value="1"/>
</dbReference>
<dbReference type="InterPro" id="IPR003373">
    <property type="entry name" value="Fe2_transport_prot-B"/>
</dbReference>
<dbReference type="InterPro" id="IPR011640">
    <property type="entry name" value="Fe2_transport_prot_B_C"/>
</dbReference>
<dbReference type="InterPro" id="IPR041069">
    <property type="entry name" value="FeoB_Cyto"/>
</dbReference>
<dbReference type="InterPro" id="IPR050860">
    <property type="entry name" value="FeoB_GTPase"/>
</dbReference>
<dbReference type="InterPro" id="IPR030389">
    <property type="entry name" value="G_FEOB_dom"/>
</dbReference>
<dbReference type="InterPro" id="IPR011642">
    <property type="entry name" value="Gate_dom"/>
</dbReference>
<dbReference type="InterPro" id="IPR027417">
    <property type="entry name" value="P-loop_NTPase"/>
</dbReference>
<dbReference type="NCBIfam" id="TIGR00437">
    <property type="entry name" value="feoB"/>
    <property type="match status" value="1"/>
</dbReference>
<dbReference type="PANTHER" id="PTHR43185:SF1">
    <property type="entry name" value="FE(2+) TRANSPORTER FEOB"/>
    <property type="match status" value="1"/>
</dbReference>
<dbReference type="PANTHER" id="PTHR43185">
    <property type="entry name" value="FERROUS IRON TRANSPORT PROTEIN B"/>
    <property type="match status" value="1"/>
</dbReference>
<dbReference type="Pfam" id="PF07664">
    <property type="entry name" value="FeoB_C"/>
    <property type="match status" value="1"/>
</dbReference>
<dbReference type="Pfam" id="PF17910">
    <property type="entry name" value="FeoB_Cyto"/>
    <property type="match status" value="1"/>
</dbReference>
<dbReference type="Pfam" id="PF02421">
    <property type="entry name" value="FeoB_N"/>
    <property type="match status" value="1"/>
</dbReference>
<dbReference type="Pfam" id="PF07670">
    <property type="entry name" value="Gate"/>
    <property type="match status" value="2"/>
</dbReference>
<dbReference type="SUPFAM" id="SSF52540">
    <property type="entry name" value="P-loop containing nucleoside triphosphate hydrolases"/>
    <property type="match status" value="1"/>
</dbReference>
<dbReference type="PROSITE" id="PS51711">
    <property type="entry name" value="G_FEOB"/>
    <property type="match status" value="1"/>
</dbReference>
<comment type="function">
    <text evidence="1">Probable transporter of a GTP-driven Fe(2+) uptake system.</text>
</comment>
<comment type="subcellular location">
    <subcellularLocation>
        <location evidence="4">Cell membrane</location>
        <topology evidence="2">Multi-pass membrane protein</topology>
    </subcellularLocation>
</comment>
<comment type="similarity">
    <text evidence="3">Belongs to the TRAFAC class TrmE-Era-EngA-EngB-Septin-like GTPase superfamily. FeoB GTPase (TC 9.A.8) family.</text>
</comment>
<evidence type="ECO:0000250" key="1">
    <source>
        <dbReference type="UniProtKB" id="P33650"/>
    </source>
</evidence>
<evidence type="ECO:0000255" key="2"/>
<evidence type="ECO:0000255" key="3">
    <source>
        <dbReference type="PROSITE-ProRule" id="PRU01048"/>
    </source>
</evidence>
<evidence type="ECO:0000305" key="4"/>
<keyword id="KW-1003">Cell membrane</keyword>
<keyword id="KW-0342">GTP-binding</keyword>
<keyword id="KW-0406">Ion transport</keyword>
<keyword id="KW-0408">Iron</keyword>
<keyword id="KW-0410">Iron transport</keyword>
<keyword id="KW-0472">Membrane</keyword>
<keyword id="KW-0547">Nucleotide-binding</keyword>
<keyword id="KW-0812">Transmembrane</keyword>
<keyword id="KW-1133">Transmembrane helix</keyword>
<keyword id="KW-0813">Transport</keyword>
<name>FEOB_STAAW</name>
<reference key="1">
    <citation type="journal article" date="2002" name="Lancet">
        <title>Genome and virulence determinants of high virulence community-acquired MRSA.</title>
        <authorList>
            <person name="Baba T."/>
            <person name="Takeuchi F."/>
            <person name="Kuroda M."/>
            <person name="Yuzawa H."/>
            <person name="Aoki K."/>
            <person name="Oguchi A."/>
            <person name="Nagai Y."/>
            <person name="Iwama N."/>
            <person name="Asano K."/>
            <person name="Naimi T."/>
            <person name="Kuroda H."/>
            <person name="Cui L."/>
            <person name="Yamamoto K."/>
            <person name="Hiramatsu K."/>
        </authorList>
    </citation>
    <scope>NUCLEOTIDE SEQUENCE [LARGE SCALE GENOMIC DNA]</scope>
    <source>
        <strain>MW2</strain>
    </source>
</reference>
<proteinExistence type="inferred from homology"/>
<gene>
    <name type="primary">feoB</name>
    <name type="ordered locus">MW2471</name>
</gene>
<sequence>MENYCILGNPNVGKTSLFNALTGSYEYIGNWSGVTVEKKVGKLKENVGQLIDLPGTYDLSPISKDETVVTDYLLNDSFSGIINIVDASQLKRNMQLTVQLLELNQPIYIGLNMIDVATKRGIKIDYHKLMKKLKTPIFPVVARTGKGTKHLLGEIKHLGEGYQPHFKINYGEKIEETIKNMCQIIMTETSHDKYQARFIAIQFLLNNMQIANELNSEVVNKLSSLRDQVDKQVEAVSVRREMERIRNHYIETLLQDVVTYPDEDKQYFSSRIDKILTHKYIGMPIFLAIMWLIFQTTFTWIGTPLSDQLDAFIGGTFTDSVKTIMNYLGVIPFLQDLITDGIIAGVGSVLVFVPQIVVLFFFISLLEDSGYMARIAVLMDRIMESFGLSGKSFIPMIIGFGCNVPSIMAARSIENEKERLTTILIAPFMSCSARLPVYALFVGIFFKENQSLVVLSLYVLGIIMAFLVSTVLTKTILKNDNAIFIVELPTYRVPSIKTLWRSTWEKAKGFVRKAGTFIFGGSVVIWLLSYVGPHGINVNINQSFLHMVGSFFGMLVQPLGFGTWQAGATLVPGFLAKEVIVSSMAIIYSSGDAGLVNVIQNQFTPLSAYAFMIFILLYIPCVSTVAAIRKETYSWKWTALAVVYPLVTAYVLTFIFYQIGHLFV</sequence>